<name>MNME_TREPS</name>
<keyword id="KW-0963">Cytoplasm</keyword>
<keyword id="KW-0342">GTP-binding</keyword>
<keyword id="KW-0378">Hydrolase</keyword>
<keyword id="KW-0460">Magnesium</keyword>
<keyword id="KW-0479">Metal-binding</keyword>
<keyword id="KW-0547">Nucleotide-binding</keyword>
<keyword id="KW-0630">Potassium</keyword>
<keyword id="KW-0819">tRNA processing</keyword>
<organism>
    <name type="scientific">Treponema pallidum subsp. pallidum (strain SS14)</name>
    <dbReference type="NCBI Taxonomy" id="455434"/>
    <lineage>
        <taxon>Bacteria</taxon>
        <taxon>Pseudomonadati</taxon>
        <taxon>Spirochaetota</taxon>
        <taxon>Spirochaetia</taxon>
        <taxon>Spirochaetales</taxon>
        <taxon>Treponemataceae</taxon>
        <taxon>Treponema</taxon>
    </lineage>
</organism>
<gene>
    <name evidence="1" type="primary">mnmE</name>
    <name evidence="1" type="synonym">trmE</name>
    <name type="ordered locus">TPASS_0550</name>
</gene>
<protein>
    <recommendedName>
        <fullName evidence="1">tRNA modification GTPase MnmE</fullName>
        <ecNumber evidence="1">3.6.-.-</ecNumber>
    </recommendedName>
</protein>
<reference key="1">
    <citation type="journal article" date="2008" name="BMC Microbiol.">
        <title>Complete genome sequence of Treponema pallidum ssp. pallidum strain SS14 determined with oligonucleotide arrays.</title>
        <authorList>
            <person name="Matejkova P."/>
            <person name="Strouhal M."/>
            <person name="Smajs D."/>
            <person name="Norris S.J."/>
            <person name="Palzkill T."/>
            <person name="Petrosino J.F."/>
            <person name="Sodergren E."/>
            <person name="Norton J.E."/>
            <person name="Singh J."/>
            <person name="Richmond T.A."/>
            <person name="Molla M.N."/>
            <person name="Albert T.J."/>
            <person name="Weinstock G.M."/>
        </authorList>
    </citation>
    <scope>NUCLEOTIDE SEQUENCE [LARGE SCALE GENOMIC DNA]</scope>
    <source>
        <strain>SS14</strain>
    </source>
</reference>
<feature type="chain" id="PRO_1000122116" description="tRNA modification GTPase MnmE">
    <location>
        <begin position="1"/>
        <end position="495"/>
    </location>
</feature>
<feature type="domain" description="TrmE-type G">
    <location>
        <begin position="223"/>
        <end position="417"/>
    </location>
</feature>
<feature type="binding site" evidence="1">
    <location>
        <position position="28"/>
    </location>
    <ligand>
        <name>(6S)-5-formyl-5,6,7,8-tetrahydrofolate</name>
        <dbReference type="ChEBI" id="CHEBI:57457"/>
    </ligand>
</feature>
<feature type="binding site" evidence="1">
    <location>
        <position position="89"/>
    </location>
    <ligand>
        <name>(6S)-5-formyl-5,6,7,8-tetrahydrofolate</name>
        <dbReference type="ChEBI" id="CHEBI:57457"/>
    </ligand>
</feature>
<feature type="binding site" evidence="1">
    <location>
        <position position="128"/>
    </location>
    <ligand>
        <name>(6S)-5-formyl-5,6,7,8-tetrahydrofolate</name>
        <dbReference type="ChEBI" id="CHEBI:57457"/>
    </ligand>
</feature>
<feature type="binding site" evidence="1">
    <location>
        <begin position="233"/>
        <end position="238"/>
    </location>
    <ligand>
        <name>GTP</name>
        <dbReference type="ChEBI" id="CHEBI:37565"/>
    </ligand>
</feature>
<feature type="binding site" evidence="1">
    <location>
        <position position="233"/>
    </location>
    <ligand>
        <name>K(+)</name>
        <dbReference type="ChEBI" id="CHEBI:29103"/>
    </ligand>
</feature>
<feature type="binding site" evidence="1">
    <location>
        <position position="237"/>
    </location>
    <ligand>
        <name>Mg(2+)</name>
        <dbReference type="ChEBI" id="CHEBI:18420"/>
    </ligand>
</feature>
<feature type="binding site" evidence="1">
    <location>
        <begin position="252"/>
        <end position="258"/>
    </location>
    <ligand>
        <name>GTP</name>
        <dbReference type="ChEBI" id="CHEBI:37565"/>
    </ligand>
</feature>
<feature type="binding site" evidence="1">
    <location>
        <position position="252"/>
    </location>
    <ligand>
        <name>K(+)</name>
        <dbReference type="ChEBI" id="CHEBI:29103"/>
    </ligand>
</feature>
<feature type="binding site" evidence="1">
    <location>
        <position position="254"/>
    </location>
    <ligand>
        <name>K(+)</name>
        <dbReference type="ChEBI" id="CHEBI:29103"/>
    </ligand>
</feature>
<feature type="binding site" evidence="1">
    <location>
        <position position="257"/>
    </location>
    <ligand>
        <name>K(+)</name>
        <dbReference type="ChEBI" id="CHEBI:29103"/>
    </ligand>
</feature>
<feature type="binding site" evidence="1">
    <location>
        <position position="258"/>
    </location>
    <ligand>
        <name>Mg(2+)</name>
        <dbReference type="ChEBI" id="CHEBI:18420"/>
    </ligand>
</feature>
<feature type="binding site" evidence="1">
    <location>
        <begin position="277"/>
        <end position="280"/>
    </location>
    <ligand>
        <name>GTP</name>
        <dbReference type="ChEBI" id="CHEBI:37565"/>
    </ligand>
</feature>
<feature type="binding site" evidence="1">
    <location>
        <position position="495"/>
    </location>
    <ligand>
        <name>(6S)-5-formyl-5,6,7,8-tetrahydrofolate</name>
        <dbReference type="ChEBI" id="CHEBI:57457"/>
    </ligand>
</feature>
<sequence>MRAHEYALDDDIVAIATALSPAALGIVRTSGSSSIERVASFFSRAQALTRARAHTFLHGWILDGKTRVDEVVLLVYRAPHSFTGEHAVEIICHGGVRTVQAVYRLCLAQGFRAAQRGEFSFRSFFHGKRDLTRIEAIQSLVDARTCAAQQQAVLHLSGALQQEIAALTRALLAFSATLQGEIEYPEDEETRVHDIDMRELEPLVERLRRLRACWQERALQRTGVRIVLGGCPNAGKSSLFNALLGQDRAIVSSVPGTTRDWLEADLDLSGIPVRLCDTAGLRVTDNPIEAQGVVRSEQLLQGADCVFYIINGRAGVQAADCAFLSDCAVPLVVVVTHNDLMSMSERIQVCQAVQPFISAPVLSCARSQDARGAGEQCLAGGKNGEVRDRAPRAFVCVSAKTHAGLDALRAQTLHLLHGGQVPYEELSLGSERQYVLVDAAVQALEHAQEAYARGFGLDAVVHDLEEALYHCGALTGEVHSEDILDALFEKLCVGK</sequence>
<proteinExistence type="inferred from homology"/>
<evidence type="ECO:0000255" key="1">
    <source>
        <dbReference type="HAMAP-Rule" id="MF_00379"/>
    </source>
</evidence>
<comment type="function">
    <text evidence="1">Exhibits a very high intrinsic GTPase hydrolysis rate. Involved in the addition of a carboxymethylaminomethyl (cmnm) group at the wobble position (U34) of certain tRNAs, forming tRNA-cmnm(5)s(2)U34.</text>
</comment>
<comment type="cofactor">
    <cofactor evidence="1">
        <name>K(+)</name>
        <dbReference type="ChEBI" id="CHEBI:29103"/>
    </cofactor>
    <text evidence="1">Binds 1 potassium ion per subunit.</text>
</comment>
<comment type="subunit">
    <text evidence="1">Homodimer. Heterotetramer of two MnmE and two MnmG subunits.</text>
</comment>
<comment type="subcellular location">
    <subcellularLocation>
        <location evidence="1">Cytoplasm</location>
    </subcellularLocation>
</comment>
<comment type="similarity">
    <text evidence="1">Belongs to the TRAFAC class TrmE-Era-EngA-EngB-Septin-like GTPase superfamily. TrmE GTPase family.</text>
</comment>
<accession>B2S3E2</accession>
<dbReference type="EC" id="3.6.-.-" evidence="1"/>
<dbReference type="EMBL" id="CP000805">
    <property type="protein sequence ID" value="ACD70971.1"/>
    <property type="molecule type" value="Genomic_DNA"/>
</dbReference>
<dbReference type="RefSeq" id="WP_010881997.1">
    <property type="nucleotide sequence ID" value="NC_021508.1"/>
</dbReference>
<dbReference type="SMR" id="B2S3E2"/>
<dbReference type="GeneID" id="93876319"/>
<dbReference type="KEGG" id="tpp:TPASS_0550"/>
<dbReference type="PATRIC" id="fig|455434.6.peg.549"/>
<dbReference type="Proteomes" id="UP000001202">
    <property type="component" value="Chromosome"/>
</dbReference>
<dbReference type="GO" id="GO:0005829">
    <property type="term" value="C:cytosol"/>
    <property type="evidence" value="ECO:0007669"/>
    <property type="project" value="TreeGrafter"/>
</dbReference>
<dbReference type="GO" id="GO:0005525">
    <property type="term" value="F:GTP binding"/>
    <property type="evidence" value="ECO:0007669"/>
    <property type="project" value="UniProtKB-UniRule"/>
</dbReference>
<dbReference type="GO" id="GO:0003924">
    <property type="term" value="F:GTPase activity"/>
    <property type="evidence" value="ECO:0007669"/>
    <property type="project" value="UniProtKB-UniRule"/>
</dbReference>
<dbReference type="GO" id="GO:0046872">
    <property type="term" value="F:metal ion binding"/>
    <property type="evidence" value="ECO:0007669"/>
    <property type="project" value="UniProtKB-KW"/>
</dbReference>
<dbReference type="GO" id="GO:0030488">
    <property type="term" value="P:tRNA methylation"/>
    <property type="evidence" value="ECO:0007669"/>
    <property type="project" value="TreeGrafter"/>
</dbReference>
<dbReference type="GO" id="GO:0002098">
    <property type="term" value="P:tRNA wobble uridine modification"/>
    <property type="evidence" value="ECO:0007669"/>
    <property type="project" value="TreeGrafter"/>
</dbReference>
<dbReference type="CDD" id="cd04164">
    <property type="entry name" value="trmE"/>
    <property type="match status" value="1"/>
</dbReference>
<dbReference type="CDD" id="cd14858">
    <property type="entry name" value="TrmE_N"/>
    <property type="match status" value="1"/>
</dbReference>
<dbReference type="Gene3D" id="3.40.50.300">
    <property type="entry name" value="P-loop containing nucleotide triphosphate hydrolases"/>
    <property type="match status" value="1"/>
</dbReference>
<dbReference type="Gene3D" id="3.30.1360.120">
    <property type="entry name" value="Probable tRNA modification gtpase trme, domain 1"/>
    <property type="match status" value="1"/>
</dbReference>
<dbReference type="Gene3D" id="1.20.120.430">
    <property type="entry name" value="tRNA modification GTPase MnmE domain 2"/>
    <property type="match status" value="1"/>
</dbReference>
<dbReference type="HAMAP" id="MF_00379">
    <property type="entry name" value="GTPase_MnmE"/>
    <property type="match status" value="1"/>
</dbReference>
<dbReference type="InterPro" id="IPR031168">
    <property type="entry name" value="G_TrmE"/>
</dbReference>
<dbReference type="InterPro" id="IPR006073">
    <property type="entry name" value="GTP-bd"/>
</dbReference>
<dbReference type="InterPro" id="IPR018948">
    <property type="entry name" value="GTP-bd_TrmE_N"/>
</dbReference>
<dbReference type="InterPro" id="IPR004520">
    <property type="entry name" value="GTPase_MnmE"/>
</dbReference>
<dbReference type="InterPro" id="IPR027368">
    <property type="entry name" value="MnmE_dom2"/>
</dbReference>
<dbReference type="InterPro" id="IPR025867">
    <property type="entry name" value="MnmE_helical"/>
</dbReference>
<dbReference type="InterPro" id="IPR027417">
    <property type="entry name" value="P-loop_NTPase"/>
</dbReference>
<dbReference type="InterPro" id="IPR005225">
    <property type="entry name" value="Small_GTP-bd"/>
</dbReference>
<dbReference type="InterPro" id="IPR027266">
    <property type="entry name" value="TrmE/GcvT_dom1"/>
</dbReference>
<dbReference type="NCBIfam" id="TIGR00450">
    <property type="entry name" value="mnmE_trmE_thdF"/>
    <property type="match status" value="1"/>
</dbReference>
<dbReference type="NCBIfam" id="TIGR00231">
    <property type="entry name" value="small_GTP"/>
    <property type="match status" value="1"/>
</dbReference>
<dbReference type="PANTHER" id="PTHR42714">
    <property type="entry name" value="TRNA MODIFICATION GTPASE GTPBP3"/>
    <property type="match status" value="1"/>
</dbReference>
<dbReference type="PANTHER" id="PTHR42714:SF2">
    <property type="entry name" value="TRNA MODIFICATION GTPASE GTPBP3, MITOCHONDRIAL"/>
    <property type="match status" value="1"/>
</dbReference>
<dbReference type="Pfam" id="PF01926">
    <property type="entry name" value="MMR_HSR1"/>
    <property type="match status" value="1"/>
</dbReference>
<dbReference type="Pfam" id="PF12631">
    <property type="entry name" value="MnmE_helical"/>
    <property type="match status" value="1"/>
</dbReference>
<dbReference type="Pfam" id="PF10396">
    <property type="entry name" value="TrmE_N"/>
    <property type="match status" value="1"/>
</dbReference>
<dbReference type="SUPFAM" id="SSF52540">
    <property type="entry name" value="P-loop containing nucleoside triphosphate hydrolases"/>
    <property type="match status" value="1"/>
</dbReference>
<dbReference type="PROSITE" id="PS51709">
    <property type="entry name" value="G_TRME"/>
    <property type="match status" value="1"/>
</dbReference>